<keyword id="KW-1185">Reference proteome</keyword>
<keyword id="KW-0677">Repeat</keyword>
<keyword id="KW-0853">WD repeat</keyword>
<accession>Q55563</accession>
<gene>
    <name type="ordered locus">sll0163</name>
</gene>
<name>Y163_SYNY3</name>
<proteinExistence type="predicted"/>
<sequence>MTVMLSCLTQQQELLQSLADRVGQPAIQDNLYFCLAGQFTWVEDWYTTAIAGDVLIFDAGEKEQLARVLQQWEQFTGHVILITGLTEEPDPQTFLTQLALGKQQRCGERHFHWIVLVDPTIEEAFRGLQTFLDGKSHWLDLRLGVGDLEQCTDELWQCVWLEPSPLAPEKRQEMLVNLPHWLAEIVDQKQNLELEPISLLQAKLSLLQGLARESRGEMGRKQAQCHYRESLDVWELLGDTEAIIWLSLRLGYLFLLQAYGEKSRGHQLWQQTRNYAQTAIAALENQQWHFTHGETLNLLGEILRGLEDWEQLRQAAENSLIFFYQLSPFAATDTTPERNQEKLWTELELQGLISLAHSYLCEALVEQWKFDEGKEALKRAFETRPKQVEERDYRPCLANLHYLAGRVQLANDQIRESLMTLRQAQTLVSFEDNPRLYLAILVELRECYLQLEDWLAALAIDQEYQAREYRLGQRAFIGPKPLPCWPEQRICRHPLAPEKMLGGGAEARSAVQSKTMVSLTWQDLQKVWEQKPTPVLVLTGEPGVGKTSWLAGEVLQQMSPERVLLVDFTPHWAEKLWVHLGESFSLPSLGQATTPELVSALQALPILDLLLVLDGENGSLPWQKSPSLRQQELAQVLWQWLLTTSPSQGVRLLISVPPTAIADLYEELKGQLGEEHSLPPLQYQTLSPPTLGQAENWLTQAMAQCRHPWPPSLQSQFLGDLAMEGNGEQQPWLHPIDLQLLGTVLEQEQVTKSADYQGKKLDEWLTLAVQTYLAFLPPHLLKKALQLLKSLADGQQALCLKTEYQLLAALYSAPEPAADNPPEFAQEDIQQLQLLLTLLLRGRLIIVISQATLPYYRLSTTHLAHALQGKSAVISTPALINAGRRGSKSNPNLIAPSPGDRQQGNEDLIAELEAGSSAEEQVVAQKLKAAQLQYQKLVAGINLEKQCQFILKQFLVYPLEALLAAVKTGQDLQKLVTPETPLVQYPSLAPWLSLHSILARINECNRCHHEGPVTVLRISPSMENTPPLVLTATTNGIAYLWSFHGELINVLRGHQEAITALDWSADGQYFATASADHTVKLWQRHGEEVATLRGHEDWVRSVHFSPHHQFLVTSGQDNTARIWNFAGEQLTLCQGHADWVRNAEFNCHGQILLTASRDGTARLWDLEGREIGLCQGHTSWVRNAQFSPDGQWIVTCSADGTARLWDLSSQCFAVLKGHQNWVNNALWSPDGQHIITSSSDGTARVWSRHGKCLGTLRGHDHNIHGARFSLDGQKIVTYSTDNTARLWTKEGTLLTILRGHQKEVYDADFSADGRFVFTVSADQTARQWDISQKDTITLTGHSHWVRNAHFNPKGDRLLTVSRDKTARLWTTEGECVAVLADHQGWVREGQFSPDGQWIVTGSADKTAQLWNVLGKKLTVLRGHQDAVLNVRFSPDSQYIVTASKDGTARVWNNTGRELAVLRHYEKNIFAAEFSADGQFIVTASDDNTAGIWEIVGREVGICRGHEGPVYFAQFSADSRYILTASVDNTARIWDFLGRPLLTLAGHQSIVYQARFSPEGNLIATVSADHTARLWDRSGKTVAVLYGHQGLVGTVDWSPDGQMLVTASNDGTARLWDLSGRELLTLEGHGNWVRSAEFSPDGRWVLTSSADGTAKLWPVKTLPQLLSQGGQWLKNYLTHNALVSPADRPGAKVT</sequence>
<organism>
    <name type="scientific">Synechocystis sp. (strain ATCC 27184 / PCC 6803 / Kazusa)</name>
    <dbReference type="NCBI Taxonomy" id="1111708"/>
    <lineage>
        <taxon>Bacteria</taxon>
        <taxon>Bacillati</taxon>
        <taxon>Cyanobacteriota</taxon>
        <taxon>Cyanophyceae</taxon>
        <taxon>Synechococcales</taxon>
        <taxon>Merismopediaceae</taxon>
        <taxon>Synechocystis</taxon>
    </lineage>
</organism>
<reference key="1">
    <citation type="journal article" date="1995" name="DNA Res.">
        <title>Sequence analysis of the genome of the unicellular cyanobacterium Synechocystis sp. strain PCC6803. I. Sequence features in the 1 Mb region from map positions 64% to 92% of the genome.</title>
        <authorList>
            <person name="Kaneko T."/>
            <person name="Tanaka A."/>
            <person name="Sato S."/>
            <person name="Kotani H."/>
            <person name="Sazuka T."/>
            <person name="Miyajima N."/>
            <person name="Sugiura M."/>
            <person name="Tabata S."/>
        </authorList>
    </citation>
    <scope>NUCLEOTIDE SEQUENCE [LARGE SCALE GENOMIC DNA]</scope>
    <source>
        <strain>ATCC 27184 / PCC 6803 / N-1</strain>
    </source>
</reference>
<reference key="2">
    <citation type="journal article" date="1996" name="DNA Res.">
        <title>Sequence analysis of the genome of the unicellular cyanobacterium Synechocystis sp. strain PCC6803. II. Sequence determination of the entire genome and assignment of potential protein-coding regions.</title>
        <authorList>
            <person name="Kaneko T."/>
            <person name="Sato S."/>
            <person name="Kotani H."/>
            <person name="Tanaka A."/>
            <person name="Asamizu E."/>
            <person name="Nakamura Y."/>
            <person name="Miyajima N."/>
            <person name="Hirosawa M."/>
            <person name="Sugiura M."/>
            <person name="Sasamoto S."/>
            <person name="Kimura T."/>
            <person name="Hosouchi T."/>
            <person name="Matsuno A."/>
            <person name="Muraki A."/>
            <person name="Nakazaki N."/>
            <person name="Naruo K."/>
            <person name="Okumura S."/>
            <person name="Shimpo S."/>
            <person name="Takeuchi C."/>
            <person name="Wada T."/>
            <person name="Watanabe A."/>
            <person name="Yamada M."/>
            <person name="Yasuda M."/>
            <person name="Tabata S."/>
        </authorList>
    </citation>
    <scope>NUCLEOTIDE SEQUENCE [LARGE SCALE GENOMIC DNA]</scope>
    <source>
        <strain>ATCC 27184 / PCC 6803 / Kazusa</strain>
    </source>
</reference>
<dbReference type="EMBL" id="BA000022">
    <property type="protein sequence ID" value="BAA10064.1"/>
    <property type="molecule type" value="Genomic_DNA"/>
</dbReference>
<dbReference type="PIR" id="S76086">
    <property type="entry name" value="S76086"/>
</dbReference>
<dbReference type="SMR" id="Q55563"/>
<dbReference type="IntAct" id="Q55563">
    <property type="interactions" value="2"/>
</dbReference>
<dbReference type="STRING" id="1148.gene:10499556"/>
<dbReference type="PaxDb" id="1148-1001440"/>
<dbReference type="EnsemblBacteria" id="BAA10064">
    <property type="protein sequence ID" value="BAA10064"/>
    <property type="gene ID" value="BAA10064"/>
</dbReference>
<dbReference type="KEGG" id="syn:sll0163"/>
<dbReference type="eggNOG" id="COG2319">
    <property type="taxonomic scope" value="Bacteria"/>
</dbReference>
<dbReference type="InParanoid" id="Q55563"/>
<dbReference type="Proteomes" id="UP000001425">
    <property type="component" value="Chromosome"/>
</dbReference>
<dbReference type="CDD" id="cd00200">
    <property type="entry name" value="WD40"/>
    <property type="match status" value="3"/>
</dbReference>
<dbReference type="Gene3D" id="1.25.40.10">
    <property type="entry name" value="Tetratricopeptide repeat domain"/>
    <property type="match status" value="1"/>
</dbReference>
<dbReference type="Gene3D" id="2.130.10.10">
    <property type="entry name" value="YVTN repeat-like/Quinoprotein amine dehydrogenase"/>
    <property type="match status" value="7"/>
</dbReference>
<dbReference type="InterPro" id="IPR020472">
    <property type="entry name" value="G-protein_beta_WD-40_rep"/>
</dbReference>
<dbReference type="InterPro" id="IPR011990">
    <property type="entry name" value="TPR-like_helical_dom_sf"/>
</dbReference>
<dbReference type="InterPro" id="IPR015943">
    <property type="entry name" value="WD40/YVTN_repeat-like_dom_sf"/>
</dbReference>
<dbReference type="InterPro" id="IPR019775">
    <property type="entry name" value="WD40_repeat_CS"/>
</dbReference>
<dbReference type="InterPro" id="IPR036322">
    <property type="entry name" value="WD40_repeat_dom_sf"/>
</dbReference>
<dbReference type="InterPro" id="IPR001680">
    <property type="entry name" value="WD40_rpt"/>
</dbReference>
<dbReference type="PANTHER" id="PTHR19879">
    <property type="entry name" value="TRANSCRIPTION INITIATION FACTOR TFIID"/>
    <property type="match status" value="1"/>
</dbReference>
<dbReference type="PANTHER" id="PTHR19879:SF9">
    <property type="entry name" value="TRANSCRIPTION INITIATION FACTOR TFIID SUBUNIT 5"/>
    <property type="match status" value="1"/>
</dbReference>
<dbReference type="Pfam" id="PF00400">
    <property type="entry name" value="WD40"/>
    <property type="match status" value="15"/>
</dbReference>
<dbReference type="PRINTS" id="PR00320">
    <property type="entry name" value="GPROTEINBRPT"/>
</dbReference>
<dbReference type="SMART" id="SM00320">
    <property type="entry name" value="WD40"/>
    <property type="match status" value="16"/>
</dbReference>
<dbReference type="SUPFAM" id="SSF82171">
    <property type="entry name" value="DPP6 N-terminal domain-like"/>
    <property type="match status" value="1"/>
</dbReference>
<dbReference type="SUPFAM" id="SSF48452">
    <property type="entry name" value="TPR-like"/>
    <property type="match status" value="1"/>
</dbReference>
<dbReference type="SUPFAM" id="SSF50978">
    <property type="entry name" value="WD40 repeat-like"/>
    <property type="match status" value="2"/>
</dbReference>
<dbReference type="PROSITE" id="PS00678">
    <property type="entry name" value="WD_REPEATS_1"/>
    <property type="match status" value="8"/>
</dbReference>
<dbReference type="PROSITE" id="PS50082">
    <property type="entry name" value="WD_REPEATS_2"/>
    <property type="match status" value="15"/>
</dbReference>
<dbReference type="PROSITE" id="PS50294">
    <property type="entry name" value="WD_REPEATS_REGION"/>
    <property type="match status" value="1"/>
</dbReference>
<protein>
    <recommendedName>
        <fullName>Uncharacterized WD repeat-containing protein sll0163</fullName>
    </recommendedName>
</protein>
<feature type="chain" id="PRO_0000051517" description="Uncharacterized WD repeat-containing protein sll0163">
    <location>
        <begin position="1"/>
        <end position="1693"/>
    </location>
</feature>
<feature type="repeat" description="WD 1">
    <location>
        <begin position="1008"/>
        <end position="1042"/>
    </location>
</feature>
<feature type="repeat" description="WD 2">
    <location>
        <begin position="1053"/>
        <end position="1083"/>
    </location>
</feature>
<feature type="repeat" description="WD 3">
    <location>
        <begin position="1094"/>
        <end position="1124"/>
    </location>
</feature>
<feature type="repeat" description="WD 4">
    <location>
        <begin position="1135"/>
        <end position="1165"/>
    </location>
</feature>
<feature type="repeat" description="WD 5">
    <location>
        <begin position="1176"/>
        <end position="1206"/>
    </location>
</feature>
<feature type="repeat" description="WD 6">
    <location>
        <begin position="1217"/>
        <end position="1247"/>
    </location>
</feature>
<feature type="repeat" description="WD 7">
    <location>
        <begin position="1258"/>
        <end position="1288"/>
    </location>
</feature>
<feature type="repeat" description="WD 8">
    <location>
        <begin position="1299"/>
        <end position="1329"/>
    </location>
</feature>
<feature type="repeat" description="WD 9">
    <location>
        <begin position="1340"/>
        <end position="1370"/>
    </location>
</feature>
<feature type="repeat" description="WD 10">
    <location>
        <begin position="1381"/>
        <end position="1411"/>
    </location>
</feature>
<feature type="repeat" description="WD 11">
    <location>
        <begin position="1422"/>
        <end position="1452"/>
    </location>
</feature>
<feature type="repeat" description="WD 12">
    <location>
        <begin position="1463"/>
        <end position="1493"/>
    </location>
</feature>
<feature type="repeat" description="WD 13">
    <location>
        <begin position="1504"/>
        <end position="1534"/>
    </location>
</feature>
<feature type="repeat" description="WD 14">
    <location>
        <begin position="1545"/>
        <end position="1575"/>
    </location>
</feature>
<feature type="repeat" description="WD 15">
    <location>
        <begin position="1586"/>
        <end position="1616"/>
    </location>
</feature>
<feature type="repeat" description="WD 16">
    <location>
        <begin position="1627"/>
        <end position="1657"/>
    </location>
</feature>